<gene>
    <name evidence="1" type="primary">rpsG</name>
    <name type="ordered locus">Bind_1350</name>
</gene>
<sequence>MSRRHSAEKREVIPDAKYGDIILTKFMNSIMYDGKKSIAEAIVYGAFDIIEQKSHNEPLSVFKQALDNVAPSIEVRSRRVGGATYQVPVEVRSERRQALAIRWIITAARGRNDKTMIDRLSAELLDAANNRGNAVKKREDTHRMAEANRAFSHYRW</sequence>
<name>RS7_BEII9</name>
<accession>B2IK58</accession>
<organism>
    <name type="scientific">Beijerinckia indica subsp. indica (strain ATCC 9039 / DSM 1715 / NCIMB 8712)</name>
    <dbReference type="NCBI Taxonomy" id="395963"/>
    <lineage>
        <taxon>Bacteria</taxon>
        <taxon>Pseudomonadati</taxon>
        <taxon>Pseudomonadota</taxon>
        <taxon>Alphaproteobacteria</taxon>
        <taxon>Hyphomicrobiales</taxon>
        <taxon>Beijerinckiaceae</taxon>
        <taxon>Beijerinckia</taxon>
    </lineage>
</organism>
<evidence type="ECO:0000255" key="1">
    <source>
        <dbReference type="HAMAP-Rule" id="MF_00480"/>
    </source>
</evidence>
<evidence type="ECO:0000305" key="2"/>
<comment type="function">
    <text evidence="1">One of the primary rRNA binding proteins, it binds directly to 16S rRNA where it nucleates assembly of the head domain of the 30S subunit. Is located at the subunit interface close to the decoding center, probably blocks exit of the E-site tRNA.</text>
</comment>
<comment type="subunit">
    <text evidence="1">Part of the 30S ribosomal subunit. Contacts proteins S9 and S11.</text>
</comment>
<comment type="similarity">
    <text evidence="1">Belongs to the universal ribosomal protein uS7 family.</text>
</comment>
<dbReference type="EMBL" id="CP001016">
    <property type="protein sequence ID" value="ACB94990.1"/>
    <property type="molecule type" value="Genomic_DNA"/>
</dbReference>
<dbReference type="RefSeq" id="WP_012384347.1">
    <property type="nucleotide sequence ID" value="NC_010581.1"/>
</dbReference>
<dbReference type="SMR" id="B2IK58"/>
<dbReference type="STRING" id="395963.Bind_1350"/>
<dbReference type="KEGG" id="bid:Bind_1350"/>
<dbReference type="eggNOG" id="COG0049">
    <property type="taxonomic scope" value="Bacteria"/>
</dbReference>
<dbReference type="HOGENOM" id="CLU_072226_1_1_5"/>
<dbReference type="OrthoDB" id="9807653at2"/>
<dbReference type="Proteomes" id="UP000001695">
    <property type="component" value="Chromosome"/>
</dbReference>
<dbReference type="GO" id="GO:0015935">
    <property type="term" value="C:small ribosomal subunit"/>
    <property type="evidence" value="ECO:0007669"/>
    <property type="project" value="InterPro"/>
</dbReference>
<dbReference type="GO" id="GO:0019843">
    <property type="term" value="F:rRNA binding"/>
    <property type="evidence" value="ECO:0007669"/>
    <property type="project" value="UniProtKB-UniRule"/>
</dbReference>
<dbReference type="GO" id="GO:0003735">
    <property type="term" value="F:structural constituent of ribosome"/>
    <property type="evidence" value="ECO:0007669"/>
    <property type="project" value="InterPro"/>
</dbReference>
<dbReference type="GO" id="GO:0000049">
    <property type="term" value="F:tRNA binding"/>
    <property type="evidence" value="ECO:0007669"/>
    <property type="project" value="UniProtKB-UniRule"/>
</dbReference>
<dbReference type="GO" id="GO:0006412">
    <property type="term" value="P:translation"/>
    <property type="evidence" value="ECO:0007669"/>
    <property type="project" value="UniProtKB-UniRule"/>
</dbReference>
<dbReference type="CDD" id="cd14869">
    <property type="entry name" value="uS7_Bacteria"/>
    <property type="match status" value="1"/>
</dbReference>
<dbReference type="FunFam" id="1.10.455.10:FF:000001">
    <property type="entry name" value="30S ribosomal protein S7"/>
    <property type="match status" value="1"/>
</dbReference>
<dbReference type="Gene3D" id="1.10.455.10">
    <property type="entry name" value="Ribosomal protein S7 domain"/>
    <property type="match status" value="1"/>
</dbReference>
<dbReference type="HAMAP" id="MF_00480_B">
    <property type="entry name" value="Ribosomal_uS7_B"/>
    <property type="match status" value="1"/>
</dbReference>
<dbReference type="InterPro" id="IPR000235">
    <property type="entry name" value="Ribosomal_uS7"/>
</dbReference>
<dbReference type="InterPro" id="IPR005717">
    <property type="entry name" value="Ribosomal_uS7_bac/org-type"/>
</dbReference>
<dbReference type="InterPro" id="IPR020606">
    <property type="entry name" value="Ribosomal_uS7_CS"/>
</dbReference>
<dbReference type="InterPro" id="IPR023798">
    <property type="entry name" value="Ribosomal_uS7_dom"/>
</dbReference>
<dbReference type="InterPro" id="IPR036823">
    <property type="entry name" value="Ribosomal_uS7_dom_sf"/>
</dbReference>
<dbReference type="NCBIfam" id="TIGR01029">
    <property type="entry name" value="rpsG_bact"/>
    <property type="match status" value="1"/>
</dbReference>
<dbReference type="PANTHER" id="PTHR11205">
    <property type="entry name" value="RIBOSOMAL PROTEIN S7"/>
    <property type="match status" value="1"/>
</dbReference>
<dbReference type="Pfam" id="PF00177">
    <property type="entry name" value="Ribosomal_S7"/>
    <property type="match status" value="1"/>
</dbReference>
<dbReference type="PIRSF" id="PIRSF002122">
    <property type="entry name" value="RPS7p_RPS7a_RPS5e_RPS7o"/>
    <property type="match status" value="1"/>
</dbReference>
<dbReference type="SUPFAM" id="SSF47973">
    <property type="entry name" value="Ribosomal protein S7"/>
    <property type="match status" value="1"/>
</dbReference>
<dbReference type="PROSITE" id="PS00052">
    <property type="entry name" value="RIBOSOMAL_S7"/>
    <property type="match status" value="1"/>
</dbReference>
<feature type="chain" id="PRO_1000125897" description="Small ribosomal subunit protein uS7">
    <location>
        <begin position="1"/>
        <end position="156"/>
    </location>
</feature>
<reference key="1">
    <citation type="journal article" date="2010" name="J. Bacteriol.">
        <title>Complete genome sequence of Beijerinckia indica subsp. indica.</title>
        <authorList>
            <person name="Tamas I."/>
            <person name="Dedysh S.N."/>
            <person name="Liesack W."/>
            <person name="Stott M.B."/>
            <person name="Alam M."/>
            <person name="Murrell J.C."/>
            <person name="Dunfield P.F."/>
        </authorList>
    </citation>
    <scope>NUCLEOTIDE SEQUENCE [LARGE SCALE GENOMIC DNA]</scope>
    <source>
        <strain>ATCC 9039 / DSM 1715 / NCIMB 8712</strain>
    </source>
</reference>
<protein>
    <recommendedName>
        <fullName evidence="1">Small ribosomal subunit protein uS7</fullName>
    </recommendedName>
    <alternativeName>
        <fullName evidence="2">30S ribosomal protein S7</fullName>
    </alternativeName>
</protein>
<proteinExistence type="inferred from homology"/>
<keyword id="KW-1185">Reference proteome</keyword>
<keyword id="KW-0687">Ribonucleoprotein</keyword>
<keyword id="KW-0689">Ribosomal protein</keyword>
<keyword id="KW-0694">RNA-binding</keyword>
<keyword id="KW-0699">rRNA-binding</keyword>
<keyword id="KW-0820">tRNA-binding</keyword>